<dbReference type="EMBL" id="AAHF01000004">
    <property type="protein sequence ID" value="EAL90249.1"/>
    <property type="molecule type" value="Genomic_DNA"/>
</dbReference>
<dbReference type="RefSeq" id="XP_752287.1">
    <property type="nucleotide sequence ID" value="XM_747194.1"/>
</dbReference>
<dbReference type="SMR" id="Q4WTI3"/>
<dbReference type="FunCoup" id="Q4WTI3">
    <property type="interactions" value="1022"/>
</dbReference>
<dbReference type="STRING" id="330879.Q4WTI3"/>
<dbReference type="EnsemblFungi" id="EAL90249">
    <property type="protein sequence ID" value="EAL90249"/>
    <property type="gene ID" value="AFUA_1G09200"/>
</dbReference>
<dbReference type="GeneID" id="3510606"/>
<dbReference type="KEGG" id="afm:AFUA_1G09200"/>
<dbReference type="VEuPathDB" id="FungiDB:Afu1g09200"/>
<dbReference type="eggNOG" id="KOG0650">
    <property type="taxonomic scope" value="Eukaryota"/>
</dbReference>
<dbReference type="HOGENOM" id="CLU_011390_0_1_1"/>
<dbReference type="InParanoid" id="Q4WTI3"/>
<dbReference type="OMA" id="MRPAKGE"/>
<dbReference type="OrthoDB" id="5571054at2759"/>
<dbReference type="Proteomes" id="UP000002530">
    <property type="component" value="Chromosome 1"/>
</dbReference>
<dbReference type="GO" id="GO:0005654">
    <property type="term" value="C:nucleoplasm"/>
    <property type="evidence" value="ECO:0007669"/>
    <property type="project" value="UniProtKB-SubCell"/>
</dbReference>
<dbReference type="GO" id="GO:0070545">
    <property type="term" value="C:PeBoW complex"/>
    <property type="evidence" value="ECO:0000318"/>
    <property type="project" value="GO_Central"/>
</dbReference>
<dbReference type="GO" id="GO:0030687">
    <property type="term" value="C:preribosome, large subunit precursor"/>
    <property type="evidence" value="ECO:0000318"/>
    <property type="project" value="GO_Central"/>
</dbReference>
<dbReference type="GO" id="GO:0070180">
    <property type="term" value="F:large ribosomal subunit rRNA binding"/>
    <property type="evidence" value="ECO:0007669"/>
    <property type="project" value="EnsemblFungi"/>
</dbReference>
<dbReference type="GO" id="GO:0043021">
    <property type="term" value="F:ribonucleoprotein complex binding"/>
    <property type="evidence" value="ECO:0000318"/>
    <property type="project" value="GO_Central"/>
</dbReference>
<dbReference type="GO" id="GO:0000466">
    <property type="term" value="P:maturation of 5.8S rRNA from tricistronic rRNA transcript (SSU-rRNA, 5.8S rRNA, LSU-rRNA)"/>
    <property type="evidence" value="ECO:0007669"/>
    <property type="project" value="UniProtKB-UniRule"/>
</dbReference>
<dbReference type="GO" id="GO:0000463">
    <property type="term" value="P:maturation of LSU-rRNA from tricistronic rRNA transcript (SSU-rRNA, 5.8S rRNA, LSU-rRNA)"/>
    <property type="evidence" value="ECO:0000318"/>
    <property type="project" value="GO_Central"/>
</dbReference>
<dbReference type="FunFam" id="2.130.10.10:FF:000061">
    <property type="entry name" value="Ribosome biogenesis protein BOP1 homolog"/>
    <property type="match status" value="1"/>
</dbReference>
<dbReference type="Gene3D" id="2.130.10.10">
    <property type="entry name" value="YVTN repeat-like/Quinoprotein amine dehydrogenase"/>
    <property type="match status" value="1"/>
</dbReference>
<dbReference type="HAMAP" id="MF_03027">
    <property type="entry name" value="BOP1"/>
    <property type="match status" value="1"/>
</dbReference>
<dbReference type="InterPro" id="IPR028598">
    <property type="entry name" value="BOP1/Erb1"/>
</dbReference>
<dbReference type="InterPro" id="IPR012953">
    <property type="entry name" value="BOP1_N_dom"/>
</dbReference>
<dbReference type="InterPro" id="IPR015943">
    <property type="entry name" value="WD40/YVTN_repeat-like_dom_sf"/>
</dbReference>
<dbReference type="InterPro" id="IPR019775">
    <property type="entry name" value="WD40_repeat_CS"/>
</dbReference>
<dbReference type="InterPro" id="IPR036322">
    <property type="entry name" value="WD40_repeat_dom_sf"/>
</dbReference>
<dbReference type="InterPro" id="IPR001680">
    <property type="entry name" value="WD40_rpt"/>
</dbReference>
<dbReference type="PANTHER" id="PTHR17605:SF0">
    <property type="entry name" value="RIBOSOME BIOGENESIS PROTEIN BOP1"/>
    <property type="match status" value="1"/>
</dbReference>
<dbReference type="PANTHER" id="PTHR17605">
    <property type="entry name" value="RIBOSOME BIOGENESIS PROTEIN BOP1 BLOCK OF PROLIFERATION 1 PROTEIN"/>
    <property type="match status" value="1"/>
</dbReference>
<dbReference type="Pfam" id="PF08145">
    <property type="entry name" value="BOP1NT"/>
    <property type="match status" value="1"/>
</dbReference>
<dbReference type="Pfam" id="PF00400">
    <property type="entry name" value="WD40"/>
    <property type="match status" value="3"/>
</dbReference>
<dbReference type="SMART" id="SM01035">
    <property type="entry name" value="BOP1NT"/>
    <property type="match status" value="1"/>
</dbReference>
<dbReference type="SMART" id="SM00320">
    <property type="entry name" value="WD40"/>
    <property type="match status" value="4"/>
</dbReference>
<dbReference type="SUPFAM" id="SSF50978">
    <property type="entry name" value="WD40 repeat-like"/>
    <property type="match status" value="1"/>
</dbReference>
<dbReference type="PROSITE" id="PS00678">
    <property type="entry name" value="WD_REPEATS_1"/>
    <property type="match status" value="1"/>
</dbReference>
<dbReference type="PROSITE" id="PS50082">
    <property type="entry name" value="WD_REPEATS_2"/>
    <property type="match status" value="2"/>
</dbReference>
<dbReference type="PROSITE" id="PS50294">
    <property type="entry name" value="WD_REPEATS_REGION"/>
    <property type="match status" value="1"/>
</dbReference>
<name>ERB1_ASPFU</name>
<reference key="1">
    <citation type="journal article" date="2005" name="Nature">
        <title>Genomic sequence of the pathogenic and allergenic filamentous fungus Aspergillus fumigatus.</title>
        <authorList>
            <person name="Nierman W.C."/>
            <person name="Pain A."/>
            <person name="Anderson M.J."/>
            <person name="Wortman J.R."/>
            <person name="Kim H.S."/>
            <person name="Arroyo J."/>
            <person name="Berriman M."/>
            <person name="Abe K."/>
            <person name="Archer D.B."/>
            <person name="Bermejo C."/>
            <person name="Bennett J.W."/>
            <person name="Bowyer P."/>
            <person name="Chen D."/>
            <person name="Collins M."/>
            <person name="Coulsen R."/>
            <person name="Davies R."/>
            <person name="Dyer P.S."/>
            <person name="Farman M.L."/>
            <person name="Fedorova N."/>
            <person name="Fedorova N.D."/>
            <person name="Feldblyum T.V."/>
            <person name="Fischer R."/>
            <person name="Fosker N."/>
            <person name="Fraser A."/>
            <person name="Garcia J.L."/>
            <person name="Garcia M.J."/>
            <person name="Goble A."/>
            <person name="Goldman G.H."/>
            <person name="Gomi K."/>
            <person name="Griffith-Jones S."/>
            <person name="Gwilliam R."/>
            <person name="Haas B.J."/>
            <person name="Haas H."/>
            <person name="Harris D.E."/>
            <person name="Horiuchi H."/>
            <person name="Huang J."/>
            <person name="Humphray S."/>
            <person name="Jimenez J."/>
            <person name="Keller N."/>
            <person name="Khouri H."/>
            <person name="Kitamoto K."/>
            <person name="Kobayashi T."/>
            <person name="Konzack S."/>
            <person name="Kulkarni R."/>
            <person name="Kumagai T."/>
            <person name="Lafton A."/>
            <person name="Latge J.-P."/>
            <person name="Li W."/>
            <person name="Lord A."/>
            <person name="Lu C."/>
            <person name="Majoros W.H."/>
            <person name="May G.S."/>
            <person name="Miller B.L."/>
            <person name="Mohamoud Y."/>
            <person name="Molina M."/>
            <person name="Monod M."/>
            <person name="Mouyna I."/>
            <person name="Mulligan S."/>
            <person name="Murphy L.D."/>
            <person name="O'Neil S."/>
            <person name="Paulsen I."/>
            <person name="Penalva M.A."/>
            <person name="Pertea M."/>
            <person name="Price C."/>
            <person name="Pritchard B.L."/>
            <person name="Quail M.A."/>
            <person name="Rabbinowitsch E."/>
            <person name="Rawlins N."/>
            <person name="Rajandream M.A."/>
            <person name="Reichard U."/>
            <person name="Renauld H."/>
            <person name="Robson G.D."/>
            <person name="Rodriguez de Cordoba S."/>
            <person name="Rodriguez-Pena J.M."/>
            <person name="Ronning C.M."/>
            <person name="Rutter S."/>
            <person name="Salzberg S.L."/>
            <person name="Sanchez M."/>
            <person name="Sanchez-Ferrero J.C."/>
            <person name="Saunders D."/>
            <person name="Seeger K."/>
            <person name="Squares R."/>
            <person name="Squares S."/>
            <person name="Takeuchi M."/>
            <person name="Tekaia F."/>
            <person name="Turner G."/>
            <person name="Vazquez de Aldana C.R."/>
            <person name="Weidman J."/>
            <person name="White O."/>
            <person name="Woodward J.R."/>
            <person name="Yu J.-H."/>
            <person name="Fraser C.M."/>
            <person name="Galagan J.E."/>
            <person name="Asai K."/>
            <person name="Machida M."/>
            <person name="Hall N."/>
            <person name="Barrell B.G."/>
            <person name="Denning D.W."/>
        </authorList>
    </citation>
    <scope>NUCLEOTIDE SEQUENCE [LARGE SCALE GENOMIC DNA]</scope>
    <source>
        <strain>ATCC MYA-4609 / CBS 101355 / FGSC A1100 / Af293</strain>
    </source>
</reference>
<protein>
    <recommendedName>
        <fullName evidence="1">Ribosome biogenesis protein erb1</fullName>
    </recommendedName>
    <alternativeName>
        <fullName evidence="1">Eukaryotic ribosome biogenesis protein 1</fullName>
    </alternativeName>
</protein>
<sequence length="795" mass="88873">MNTSKASKKRKAVTRDVEEEAGVFSGDELNTGNLDGALSDNAHDLSSDEDESDSEVELIDDFSDEEDEEEEDVLDSDEIPSDGEDSAKKKSNAAPGELGAVIDDDDDDDDESPSEEEQLNYRIEKDANGNDRFVYDEINPDDNSDYSDVDENANTIGNIPLSFYDQYPHIGYDINGKKIMRPAKGEALDALLDSIEIPKGWTGLTDPSTGKPLELSQEELELLRKVQMNEIPEDGYNPYEPIVEWFTSQQEIMPLSAAPEPKRRFVPSKHEAKRVMKIVKAIREGRILPFKPPTEEDEEDDTIVKYDLWADEAERKDHPMHIPAPKLPPPGYEESYHPPPEYLPSRKERKTWEEADPEDRDREFLPNDFGSLRRVPGYENFVKEKFERCLDLYLAPRVRRSKLNIDPESLLPKLPSPEELKPFPTACATVFRGHKGRVRTLAVDPSGLWLASGGDDGTVRVWELLTGRQLWSVKLSEEDPVNVVRWRPGKDALILAAAAGDDIFLAVPPIVDPAMEKASLDILDAGWGYAASVPPPTPAEANKKNNPPKWMRPSSSLADSGVCAVIPLRYVAKSLSWHRRGDYFVTVCPGSSTPASVAIAIHTLSKHLTQYPFRRRIKGGGPPQAAHFHPSKPILFVANQRSIRAYDLSRQLLVKILQPGARWISSFDIHPTSSTASGGDNLIVGSYDRRLLWHDLELSQRPYKTLRYHRKAIRAVKFHPGGRYPLFADASDDGSLQIFHGSVTGDMLSNATIVPLKVLKGHKITGELGVLDVDWHPREPWCVSAGADGTCRLWM</sequence>
<proteinExistence type="inferred from homology"/>
<accession>Q4WTI3</accession>
<organism>
    <name type="scientific">Aspergillus fumigatus (strain ATCC MYA-4609 / CBS 101355 / FGSC A1100 / Af293)</name>
    <name type="common">Neosartorya fumigata</name>
    <dbReference type="NCBI Taxonomy" id="330879"/>
    <lineage>
        <taxon>Eukaryota</taxon>
        <taxon>Fungi</taxon>
        <taxon>Dikarya</taxon>
        <taxon>Ascomycota</taxon>
        <taxon>Pezizomycotina</taxon>
        <taxon>Eurotiomycetes</taxon>
        <taxon>Eurotiomycetidae</taxon>
        <taxon>Eurotiales</taxon>
        <taxon>Aspergillaceae</taxon>
        <taxon>Aspergillus</taxon>
        <taxon>Aspergillus subgen. Fumigati</taxon>
    </lineage>
</organism>
<gene>
    <name type="primary">erb1</name>
    <name type="ORF">AFUA_1G09200</name>
</gene>
<evidence type="ECO:0000255" key="1">
    <source>
        <dbReference type="HAMAP-Rule" id="MF_03027"/>
    </source>
</evidence>
<evidence type="ECO:0000256" key="2">
    <source>
        <dbReference type="SAM" id="MobiDB-lite"/>
    </source>
</evidence>
<feature type="chain" id="PRO_0000370418" description="Ribosome biogenesis protein erb1">
    <location>
        <begin position="1"/>
        <end position="795"/>
    </location>
</feature>
<feature type="repeat" description="WD 1">
    <location>
        <begin position="433"/>
        <end position="472"/>
    </location>
</feature>
<feature type="repeat" description="WD 2">
    <location>
        <begin position="476"/>
        <end position="516"/>
    </location>
</feature>
<feature type="repeat" description="WD 3">
    <location>
        <begin position="618"/>
        <end position="656"/>
    </location>
</feature>
<feature type="repeat" description="WD 4">
    <location>
        <begin position="659"/>
        <end position="704"/>
    </location>
</feature>
<feature type="repeat" description="WD 5">
    <location>
        <begin position="708"/>
        <end position="749"/>
    </location>
</feature>
<feature type="repeat" description="WD 6">
    <location>
        <begin position="765"/>
        <end position="795"/>
    </location>
</feature>
<feature type="region of interest" description="Disordered" evidence="2">
    <location>
        <begin position="1"/>
        <end position="133"/>
    </location>
</feature>
<feature type="region of interest" description="Disordered" evidence="2">
    <location>
        <begin position="319"/>
        <end position="365"/>
    </location>
</feature>
<feature type="compositionally biased region" description="Basic residues" evidence="2">
    <location>
        <begin position="1"/>
        <end position="12"/>
    </location>
</feature>
<feature type="compositionally biased region" description="Acidic residues" evidence="2">
    <location>
        <begin position="47"/>
        <end position="84"/>
    </location>
</feature>
<feature type="compositionally biased region" description="Acidic residues" evidence="2">
    <location>
        <begin position="102"/>
        <end position="118"/>
    </location>
</feature>
<feature type="compositionally biased region" description="Basic and acidic residues" evidence="2">
    <location>
        <begin position="122"/>
        <end position="133"/>
    </location>
</feature>
<feature type="compositionally biased region" description="Pro residues" evidence="2">
    <location>
        <begin position="325"/>
        <end position="342"/>
    </location>
</feature>
<feature type="compositionally biased region" description="Basic and acidic residues" evidence="2">
    <location>
        <begin position="344"/>
        <end position="365"/>
    </location>
</feature>
<keyword id="KW-0539">Nucleus</keyword>
<keyword id="KW-1185">Reference proteome</keyword>
<keyword id="KW-0677">Repeat</keyword>
<keyword id="KW-0690">Ribosome biogenesis</keyword>
<keyword id="KW-0698">rRNA processing</keyword>
<keyword id="KW-0853">WD repeat</keyword>
<comment type="function">
    <text evidence="1">Component of the NOP7 complex, which is required for maturation of the 25S and 5.8S ribosomal RNAs and formation of the 60S ribosome.</text>
</comment>
<comment type="subunit">
    <text evidence="1">Component of the NOP7 complex, composed of erb1, nop7 and ytm1. The complex is held together by erb1, which interacts with nop7 via its N-terminal domain and with ytm1 via a high-affinity interaction between the seven-bladed beta-propeller domains of the 2 proteins. The NOP7 complex associates with the 66S pre-ribosome.</text>
</comment>
<comment type="subcellular location">
    <subcellularLocation>
        <location evidence="1">Nucleus</location>
        <location evidence="1">Nucleolus</location>
    </subcellularLocation>
    <subcellularLocation>
        <location evidence="1">Nucleus</location>
        <location evidence="1">Nucleoplasm</location>
    </subcellularLocation>
</comment>
<comment type="similarity">
    <text evidence="1">Belongs to the WD repeat BOP1/ERB1 family.</text>
</comment>